<reference key="1">
    <citation type="journal article" date="2009" name="PLoS Genet.">
        <title>Organised genome dynamics in the Escherichia coli species results in highly diverse adaptive paths.</title>
        <authorList>
            <person name="Touchon M."/>
            <person name="Hoede C."/>
            <person name="Tenaillon O."/>
            <person name="Barbe V."/>
            <person name="Baeriswyl S."/>
            <person name="Bidet P."/>
            <person name="Bingen E."/>
            <person name="Bonacorsi S."/>
            <person name="Bouchier C."/>
            <person name="Bouvet O."/>
            <person name="Calteau A."/>
            <person name="Chiapello H."/>
            <person name="Clermont O."/>
            <person name="Cruveiller S."/>
            <person name="Danchin A."/>
            <person name="Diard M."/>
            <person name="Dossat C."/>
            <person name="Karoui M.E."/>
            <person name="Frapy E."/>
            <person name="Garry L."/>
            <person name="Ghigo J.M."/>
            <person name="Gilles A.M."/>
            <person name="Johnson J."/>
            <person name="Le Bouguenec C."/>
            <person name="Lescat M."/>
            <person name="Mangenot S."/>
            <person name="Martinez-Jehanne V."/>
            <person name="Matic I."/>
            <person name="Nassif X."/>
            <person name="Oztas S."/>
            <person name="Petit M.A."/>
            <person name="Pichon C."/>
            <person name="Rouy Z."/>
            <person name="Ruf C.S."/>
            <person name="Schneider D."/>
            <person name="Tourret J."/>
            <person name="Vacherie B."/>
            <person name="Vallenet D."/>
            <person name="Medigue C."/>
            <person name="Rocha E.P.C."/>
            <person name="Denamur E."/>
        </authorList>
    </citation>
    <scope>NUCLEOTIDE SEQUENCE [LARGE SCALE GENOMIC DNA]</scope>
    <source>
        <strain>S88 / ExPEC</strain>
    </source>
</reference>
<protein>
    <recommendedName>
        <fullName evidence="1">Enterobactin exporter EntS</fullName>
    </recommendedName>
</protein>
<proteinExistence type="inferred from homology"/>
<name>ENTS_ECO45</name>
<keyword id="KW-0997">Cell inner membrane</keyword>
<keyword id="KW-1003">Cell membrane</keyword>
<keyword id="KW-0472">Membrane</keyword>
<keyword id="KW-1185">Reference proteome</keyword>
<keyword id="KW-0812">Transmembrane</keyword>
<keyword id="KW-1133">Transmembrane helix</keyword>
<keyword id="KW-0813">Transport</keyword>
<feature type="chain" id="PRO_1000145842" description="Enterobactin exporter EntS">
    <location>
        <begin position="1"/>
        <end position="416"/>
    </location>
</feature>
<feature type="topological domain" description="Cytoplasmic" evidence="1">
    <location>
        <begin position="1"/>
        <end position="21"/>
    </location>
</feature>
<feature type="transmembrane region" description="Helical" evidence="1">
    <location>
        <begin position="22"/>
        <end position="42"/>
    </location>
</feature>
<feature type="topological domain" description="Periplasmic" evidence="1">
    <location>
        <begin position="43"/>
        <end position="55"/>
    </location>
</feature>
<feature type="transmembrane region" description="Helical" evidence="1">
    <location>
        <begin position="56"/>
        <end position="76"/>
    </location>
</feature>
<feature type="topological domain" description="Cytoplasmic" evidence="1">
    <location>
        <begin position="77"/>
        <end position="83"/>
    </location>
</feature>
<feature type="transmembrane region" description="Helical" evidence="1">
    <location>
        <begin position="84"/>
        <end position="104"/>
    </location>
</feature>
<feature type="topological domain" description="Periplasmic" evidence="1">
    <location>
        <begin position="105"/>
        <end position="109"/>
    </location>
</feature>
<feature type="transmembrane region" description="Helical" evidence="1">
    <location>
        <begin position="110"/>
        <end position="130"/>
    </location>
</feature>
<feature type="topological domain" description="Cytoplasmic" evidence="1">
    <location>
        <begin position="131"/>
        <end position="156"/>
    </location>
</feature>
<feature type="transmembrane region" description="Helical" evidence="1">
    <location>
        <begin position="157"/>
        <end position="177"/>
    </location>
</feature>
<feature type="topological domain" description="Periplasmic" evidence="1">
    <location>
        <position position="178"/>
    </location>
</feature>
<feature type="transmembrane region" description="Helical" evidence="1">
    <location>
        <begin position="179"/>
        <end position="199"/>
    </location>
</feature>
<feature type="topological domain" description="Cytoplasmic" evidence="1">
    <location>
        <begin position="200"/>
        <end position="218"/>
    </location>
</feature>
<feature type="transmembrane region" description="Helical" evidence="1">
    <location>
        <begin position="219"/>
        <end position="239"/>
    </location>
</feature>
<feature type="topological domain" description="Periplasmic" evidence="1">
    <location>
        <begin position="240"/>
        <end position="256"/>
    </location>
</feature>
<feature type="transmembrane region" description="Helical" evidence="1">
    <location>
        <begin position="257"/>
        <end position="277"/>
    </location>
</feature>
<feature type="topological domain" description="Cytoplasmic" evidence="1">
    <location>
        <begin position="278"/>
        <end position="287"/>
    </location>
</feature>
<feature type="transmembrane region" description="Helical" evidence="1">
    <location>
        <begin position="288"/>
        <end position="307"/>
    </location>
</feature>
<feature type="topological domain" description="Periplasmic" evidence="1">
    <location>
        <begin position="308"/>
        <end position="313"/>
    </location>
</feature>
<feature type="transmembrane region" description="Helical" evidence="1">
    <location>
        <begin position="314"/>
        <end position="336"/>
    </location>
</feature>
<feature type="topological domain" description="Cytoplasmic" evidence="1">
    <location>
        <begin position="337"/>
        <end position="356"/>
    </location>
</feature>
<feature type="transmembrane region" description="Helical" evidence="1">
    <location>
        <begin position="357"/>
        <end position="377"/>
    </location>
</feature>
<feature type="topological domain" description="Periplasmic" evidence="1">
    <location>
        <position position="378"/>
    </location>
</feature>
<feature type="transmembrane region" description="Helical" evidence="1">
    <location>
        <begin position="379"/>
        <end position="399"/>
    </location>
</feature>
<feature type="topological domain" description="Cytoplasmic" evidence="1">
    <location>
        <begin position="400"/>
        <end position="416"/>
    </location>
</feature>
<comment type="function">
    <text evidence="1">Component of an export pathway for enterobactin.</text>
</comment>
<comment type="subcellular location">
    <subcellularLocation>
        <location evidence="1">Cell inner membrane</location>
        <topology evidence="1">Multi-pass membrane protein</topology>
    </subcellularLocation>
</comment>
<comment type="similarity">
    <text evidence="1">Belongs to the major facilitator superfamily. EntS (TC 2.A.1.38) family.</text>
</comment>
<gene>
    <name evidence="1" type="primary">entS</name>
    <name type="ordered locus">ECS88_0630</name>
</gene>
<evidence type="ECO:0000255" key="1">
    <source>
        <dbReference type="HAMAP-Rule" id="MF_01436"/>
    </source>
</evidence>
<sequence>MNKQSWLLNLSLLKTHPAFRAVFLARFISIVSLGLLGVAVPVQIQMMTHSTWQVGLSVTLTGGAMFVGLMVGGVLADRYERKKVILLARGTCGIGFIGLCLNALLPEPSLLAIYLLGLWDGFFASLGVTALLAATPALVGRENLMQAGAITMLTVRLGSVISPMIGGLLLATGGVAWNYGLAAAGTFITLLPLLSLPALPPPPQPREHPLKSLLAGFRFLLASPLVGGIALLGGLLTMASAVRVLYPALADNWQMSAAQIGFLYAAIPLGAAIGALTSGKLAHSVRPGLLMLLSTLGAFLAISLFGLMPMWILGVVCLALFGWLSAVSSLLQYTMLQTQTPEAMLGRINGLWTAQNVTGDAIGAALLGGLGAMMTPVASASASGFGLLIIGVLLLLVLVELRRFRQTPPQVTASDS</sequence>
<dbReference type="EMBL" id="CU928161">
    <property type="protein sequence ID" value="CAR01972.1"/>
    <property type="molecule type" value="Genomic_DNA"/>
</dbReference>
<dbReference type="RefSeq" id="WP_001041795.1">
    <property type="nucleotide sequence ID" value="NC_011742.1"/>
</dbReference>
<dbReference type="SMR" id="B7MF03"/>
<dbReference type="KEGG" id="ecz:ECS88_0630"/>
<dbReference type="HOGENOM" id="CLU_034180_11_0_6"/>
<dbReference type="Proteomes" id="UP000000747">
    <property type="component" value="Chromosome"/>
</dbReference>
<dbReference type="GO" id="GO:0005886">
    <property type="term" value="C:plasma membrane"/>
    <property type="evidence" value="ECO:0007669"/>
    <property type="project" value="UniProtKB-SubCell"/>
</dbReference>
<dbReference type="GO" id="GO:0042931">
    <property type="term" value="F:enterobactin transmembrane transporter activity"/>
    <property type="evidence" value="ECO:0007669"/>
    <property type="project" value="InterPro"/>
</dbReference>
<dbReference type="CDD" id="cd06173">
    <property type="entry name" value="MFS_MefA_like"/>
    <property type="match status" value="1"/>
</dbReference>
<dbReference type="FunFam" id="1.20.1250.20:FF:000056">
    <property type="entry name" value="Enterobactin exporter EntS"/>
    <property type="match status" value="1"/>
</dbReference>
<dbReference type="Gene3D" id="1.20.1250.20">
    <property type="entry name" value="MFS general substrate transporter like domains"/>
    <property type="match status" value="1"/>
</dbReference>
<dbReference type="HAMAP" id="MF_01436">
    <property type="entry name" value="MFS_EntS"/>
    <property type="match status" value="1"/>
</dbReference>
<dbReference type="InterPro" id="IPR023722">
    <property type="entry name" value="Enterobactin_exp_EntS"/>
</dbReference>
<dbReference type="InterPro" id="IPR020846">
    <property type="entry name" value="MFS_dom"/>
</dbReference>
<dbReference type="InterPro" id="IPR036259">
    <property type="entry name" value="MFS_trans_sf"/>
</dbReference>
<dbReference type="InterPro" id="IPR010290">
    <property type="entry name" value="TM_effector"/>
</dbReference>
<dbReference type="NCBIfam" id="NF007792">
    <property type="entry name" value="PRK10489.1"/>
    <property type="match status" value="1"/>
</dbReference>
<dbReference type="PANTHER" id="PTHR23513:SF9">
    <property type="entry name" value="ENTEROBACTIN EXPORTER ENTS"/>
    <property type="match status" value="1"/>
</dbReference>
<dbReference type="PANTHER" id="PTHR23513">
    <property type="entry name" value="INTEGRAL MEMBRANE EFFLUX PROTEIN-RELATED"/>
    <property type="match status" value="1"/>
</dbReference>
<dbReference type="Pfam" id="PF05977">
    <property type="entry name" value="MFS_3"/>
    <property type="match status" value="1"/>
</dbReference>
<dbReference type="SUPFAM" id="SSF103473">
    <property type="entry name" value="MFS general substrate transporter"/>
    <property type="match status" value="1"/>
</dbReference>
<dbReference type="PROSITE" id="PS50850">
    <property type="entry name" value="MFS"/>
    <property type="match status" value="1"/>
</dbReference>
<organism>
    <name type="scientific">Escherichia coli O45:K1 (strain S88 / ExPEC)</name>
    <dbReference type="NCBI Taxonomy" id="585035"/>
    <lineage>
        <taxon>Bacteria</taxon>
        <taxon>Pseudomonadati</taxon>
        <taxon>Pseudomonadota</taxon>
        <taxon>Gammaproteobacteria</taxon>
        <taxon>Enterobacterales</taxon>
        <taxon>Enterobacteriaceae</taxon>
        <taxon>Escherichia</taxon>
    </lineage>
</organism>
<accession>B7MF03</accession>